<comment type="catalytic activity">
    <reaction evidence="1">
        <text>2-formamido-N(1)-(5-O-phospho-beta-D-ribosyl)acetamidine + ATP = 5-amino-1-(5-phospho-beta-D-ribosyl)imidazole + ADP + phosphate + H(+)</text>
        <dbReference type="Rhea" id="RHEA:23032"/>
        <dbReference type="ChEBI" id="CHEBI:15378"/>
        <dbReference type="ChEBI" id="CHEBI:30616"/>
        <dbReference type="ChEBI" id="CHEBI:43474"/>
        <dbReference type="ChEBI" id="CHEBI:137981"/>
        <dbReference type="ChEBI" id="CHEBI:147287"/>
        <dbReference type="ChEBI" id="CHEBI:456216"/>
        <dbReference type="EC" id="6.3.3.1"/>
    </reaction>
</comment>
<comment type="pathway">
    <text evidence="1">Purine metabolism; IMP biosynthesis via de novo pathway; 5-amino-1-(5-phospho-D-ribosyl)imidazole from N(2)-formyl-N(1)-(5-phospho-D-ribosyl)glycinamide: step 2/2.</text>
</comment>
<comment type="subcellular location">
    <subcellularLocation>
        <location evidence="1">Cytoplasm</location>
    </subcellularLocation>
</comment>
<comment type="similarity">
    <text evidence="1">Belongs to the AIR synthase family.</text>
</comment>
<keyword id="KW-0067">ATP-binding</keyword>
<keyword id="KW-0963">Cytoplasm</keyword>
<keyword id="KW-0436">Ligase</keyword>
<keyword id="KW-0547">Nucleotide-binding</keyword>
<keyword id="KW-0658">Purine biosynthesis</keyword>
<keyword id="KW-1185">Reference proteome</keyword>
<proteinExistence type="inferred from homology"/>
<dbReference type="EC" id="6.3.3.1" evidence="1"/>
<dbReference type="EMBL" id="CP000352">
    <property type="protein sequence ID" value="ABF09784.1"/>
    <property type="molecule type" value="Genomic_DNA"/>
</dbReference>
<dbReference type="RefSeq" id="WP_008641981.1">
    <property type="nucleotide sequence ID" value="NC_007973.1"/>
</dbReference>
<dbReference type="SMR" id="Q1LJ92"/>
<dbReference type="STRING" id="266264.Rmet_2911"/>
<dbReference type="GeneID" id="60820653"/>
<dbReference type="KEGG" id="rme:Rmet_2911"/>
<dbReference type="eggNOG" id="COG0150">
    <property type="taxonomic scope" value="Bacteria"/>
</dbReference>
<dbReference type="HOGENOM" id="CLU_047116_0_0_4"/>
<dbReference type="UniPathway" id="UPA00074">
    <property type="reaction ID" value="UER00129"/>
</dbReference>
<dbReference type="Proteomes" id="UP000002429">
    <property type="component" value="Chromosome"/>
</dbReference>
<dbReference type="GO" id="GO:0005829">
    <property type="term" value="C:cytosol"/>
    <property type="evidence" value="ECO:0007669"/>
    <property type="project" value="TreeGrafter"/>
</dbReference>
<dbReference type="GO" id="GO:0005524">
    <property type="term" value="F:ATP binding"/>
    <property type="evidence" value="ECO:0007669"/>
    <property type="project" value="UniProtKB-KW"/>
</dbReference>
<dbReference type="GO" id="GO:0004637">
    <property type="term" value="F:phosphoribosylamine-glycine ligase activity"/>
    <property type="evidence" value="ECO:0007669"/>
    <property type="project" value="TreeGrafter"/>
</dbReference>
<dbReference type="GO" id="GO:0004641">
    <property type="term" value="F:phosphoribosylformylglycinamidine cyclo-ligase activity"/>
    <property type="evidence" value="ECO:0007669"/>
    <property type="project" value="UniProtKB-UniRule"/>
</dbReference>
<dbReference type="GO" id="GO:0006189">
    <property type="term" value="P:'de novo' IMP biosynthetic process"/>
    <property type="evidence" value="ECO:0007669"/>
    <property type="project" value="UniProtKB-UniRule"/>
</dbReference>
<dbReference type="GO" id="GO:0046084">
    <property type="term" value="P:adenine biosynthetic process"/>
    <property type="evidence" value="ECO:0007669"/>
    <property type="project" value="TreeGrafter"/>
</dbReference>
<dbReference type="CDD" id="cd02196">
    <property type="entry name" value="PurM"/>
    <property type="match status" value="1"/>
</dbReference>
<dbReference type="FunFam" id="3.30.1330.10:FF:000001">
    <property type="entry name" value="Phosphoribosylformylglycinamidine cyclo-ligase"/>
    <property type="match status" value="1"/>
</dbReference>
<dbReference type="FunFam" id="3.90.650.10:FF:000001">
    <property type="entry name" value="Phosphoribosylformylglycinamidine cyclo-ligase"/>
    <property type="match status" value="1"/>
</dbReference>
<dbReference type="Gene3D" id="3.90.650.10">
    <property type="entry name" value="PurM-like C-terminal domain"/>
    <property type="match status" value="1"/>
</dbReference>
<dbReference type="Gene3D" id="3.30.1330.10">
    <property type="entry name" value="PurM-like, N-terminal domain"/>
    <property type="match status" value="1"/>
</dbReference>
<dbReference type="HAMAP" id="MF_00741">
    <property type="entry name" value="AIRS"/>
    <property type="match status" value="1"/>
</dbReference>
<dbReference type="InterPro" id="IPR010918">
    <property type="entry name" value="PurM-like_C_dom"/>
</dbReference>
<dbReference type="InterPro" id="IPR036676">
    <property type="entry name" value="PurM-like_C_sf"/>
</dbReference>
<dbReference type="InterPro" id="IPR016188">
    <property type="entry name" value="PurM-like_N"/>
</dbReference>
<dbReference type="InterPro" id="IPR036921">
    <property type="entry name" value="PurM-like_N_sf"/>
</dbReference>
<dbReference type="InterPro" id="IPR004733">
    <property type="entry name" value="PurM_cligase"/>
</dbReference>
<dbReference type="NCBIfam" id="TIGR00878">
    <property type="entry name" value="purM"/>
    <property type="match status" value="1"/>
</dbReference>
<dbReference type="PANTHER" id="PTHR10520:SF12">
    <property type="entry name" value="TRIFUNCTIONAL PURINE BIOSYNTHETIC PROTEIN ADENOSINE-3"/>
    <property type="match status" value="1"/>
</dbReference>
<dbReference type="PANTHER" id="PTHR10520">
    <property type="entry name" value="TRIFUNCTIONAL PURINE BIOSYNTHETIC PROTEIN ADENOSINE-3-RELATED"/>
    <property type="match status" value="1"/>
</dbReference>
<dbReference type="Pfam" id="PF00586">
    <property type="entry name" value="AIRS"/>
    <property type="match status" value="1"/>
</dbReference>
<dbReference type="Pfam" id="PF02769">
    <property type="entry name" value="AIRS_C"/>
    <property type="match status" value="1"/>
</dbReference>
<dbReference type="SUPFAM" id="SSF56042">
    <property type="entry name" value="PurM C-terminal domain-like"/>
    <property type="match status" value="1"/>
</dbReference>
<dbReference type="SUPFAM" id="SSF55326">
    <property type="entry name" value="PurM N-terminal domain-like"/>
    <property type="match status" value="1"/>
</dbReference>
<protein>
    <recommendedName>
        <fullName evidence="1">Phosphoribosylformylglycinamidine cyclo-ligase</fullName>
        <ecNumber evidence="1">6.3.3.1</ecNumber>
    </recommendedName>
    <alternativeName>
        <fullName evidence="1">AIR synthase</fullName>
    </alternativeName>
    <alternativeName>
        <fullName evidence="1">AIRS</fullName>
    </alternativeName>
    <alternativeName>
        <fullName evidence="1">Phosphoribosyl-aminoimidazole synthetase</fullName>
    </alternativeName>
</protein>
<name>PUR5_CUPMC</name>
<reference key="1">
    <citation type="journal article" date="2010" name="PLoS ONE">
        <title>The complete genome sequence of Cupriavidus metallidurans strain CH34, a master survivalist in harsh and anthropogenic environments.</title>
        <authorList>
            <person name="Janssen P.J."/>
            <person name="Van Houdt R."/>
            <person name="Moors H."/>
            <person name="Monsieurs P."/>
            <person name="Morin N."/>
            <person name="Michaux A."/>
            <person name="Benotmane M.A."/>
            <person name="Leys N."/>
            <person name="Vallaeys T."/>
            <person name="Lapidus A."/>
            <person name="Monchy S."/>
            <person name="Medigue C."/>
            <person name="Taghavi S."/>
            <person name="McCorkle S."/>
            <person name="Dunn J."/>
            <person name="van der Lelie D."/>
            <person name="Mergeay M."/>
        </authorList>
    </citation>
    <scope>NUCLEOTIDE SEQUENCE [LARGE SCALE GENOMIC DNA]</scope>
    <source>
        <strain>ATCC 43123 / DSM 2839 / NBRC 102507 / CH34</strain>
    </source>
</reference>
<gene>
    <name evidence="1" type="primary">purM</name>
    <name type="ordered locus">Rmet_2911</name>
</gene>
<feature type="chain" id="PRO_0000258390" description="Phosphoribosylformylglycinamidine cyclo-ligase">
    <location>
        <begin position="1"/>
        <end position="350"/>
    </location>
</feature>
<organism>
    <name type="scientific">Cupriavidus metallidurans (strain ATCC 43123 / DSM 2839 / NBRC 102507 / CH34)</name>
    <name type="common">Ralstonia metallidurans</name>
    <dbReference type="NCBI Taxonomy" id="266264"/>
    <lineage>
        <taxon>Bacteria</taxon>
        <taxon>Pseudomonadati</taxon>
        <taxon>Pseudomonadota</taxon>
        <taxon>Betaproteobacteria</taxon>
        <taxon>Burkholderiales</taxon>
        <taxon>Burkholderiaceae</taxon>
        <taxon>Cupriavidus</taxon>
    </lineage>
</organism>
<evidence type="ECO:0000255" key="1">
    <source>
        <dbReference type="HAMAP-Rule" id="MF_00741"/>
    </source>
</evidence>
<sequence>MSASPTAGQAGLSYRDAGVDIEAGDALVDRIKPFAKRTMREGVMAGIGGFGALFELSKKYQEPVLVSGTDGVGTKLKLAFQLNRHDTVGQDLVAMSVNDILVQGAEPLFFLDYFACGKLDVETAATVIKGIAHGCELAGCALIGGETAEMPSMYPDGEYDLAGFAVGAVEKKKIIDGSTITPGDVVLGLASSGAHSNGYSLVRKIIDVARPNLDADFHGQRLQDAIMAPTRIYVKPLLSLIETLPVKGMAHITGGGLTENVPRVLADNVTAVIQRDAWTLPPLFQWLQAEGRVADAEMHRVFNCGIGMVVIVAKEDAERAIRHLQAAGEAVWQIGEIRERAEGQAQTVVV</sequence>
<accession>Q1LJ92</accession>